<keyword id="KW-0496">Mitochondrion</keyword>
<keyword id="KW-1185">Reference proteome</keyword>
<keyword id="KW-0687">Ribonucleoprotein</keyword>
<keyword id="KW-0689">Ribosomal protein</keyword>
<reference key="1">
    <citation type="journal article" date="1998" name="Science">
        <title>Genome sequence of the nematode C. elegans: a platform for investigating biology.</title>
        <authorList>
            <consortium name="The C. elegans sequencing consortium"/>
        </authorList>
    </citation>
    <scope>NUCLEOTIDE SEQUENCE [LARGE SCALE GENOMIC DNA]</scope>
    <source>
        <strain>Bristol N2</strain>
    </source>
</reference>
<reference key="2">
    <citation type="journal article" date="2012" name="PLoS ONE">
        <title>A directed RNAi screen based on larval growth arrest reveals new modifiers of C. elegans insulin signaling.</title>
        <authorList>
            <person name="Billing O."/>
            <person name="Natarajan B."/>
            <person name="Mohammed A."/>
            <person name="Naredi P."/>
            <person name="Kao G."/>
        </authorList>
    </citation>
    <scope>FUNCTION</scope>
    <scope>DISRUPTION PHENOTYPE</scope>
</reference>
<dbReference type="EMBL" id="AL032626">
    <property type="protein sequence ID" value="CAA21535.1"/>
    <property type="molecule type" value="Genomic_DNA"/>
</dbReference>
<dbReference type="PIR" id="T26634">
    <property type="entry name" value="T26634"/>
</dbReference>
<dbReference type="RefSeq" id="NP_499685.1">
    <property type="nucleotide sequence ID" value="NM_067284.7"/>
</dbReference>
<dbReference type="SMR" id="Q9XWV5"/>
<dbReference type="BioGRID" id="54251">
    <property type="interactions" value="2"/>
</dbReference>
<dbReference type="FunCoup" id="Q9XWV5">
    <property type="interactions" value="2355"/>
</dbReference>
<dbReference type="STRING" id="6239.Y37D8A.18.1"/>
<dbReference type="PaxDb" id="6239-Y37D8A.18"/>
<dbReference type="PeptideAtlas" id="Q9XWV5"/>
<dbReference type="EnsemblMetazoa" id="Y37D8A.18.1">
    <property type="protein sequence ID" value="Y37D8A.18.1"/>
    <property type="gene ID" value="WBGene00012556"/>
</dbReference>
<dbReference type="GeneID" id="189618"/>
<dbReference type="KEGG" id="cel:CELE_Y37D8A.18"/>
<dbReference type="UCSC" id="Y37D8A.18">
    <property type="organism name" value="c. elegans"/>
</dbReference>
<dbReference type="AGR" id="WB:WBGene00012556"/>
<dbReference type="CTD" id="189618"/>
<dbReference type="WormBase" id="Y37D8A.18">
    <property type="protein sequence ID" value="CE20222"/>
    <property type="gene ID" value="WBGene00012556"/>
    <property type="gene designation" value="mrps-10"/>
</dbReference>
<dbReference type="eggNOG" id="KOG3321">
    <property type="taxonomic scope" value="Eukaryota"/>
</dbReference>
<dbReference type="GeneTree" id="ENSGT00390000009045"/>
<dbReference type="HOGENOM" id="CLU_099082_1_0_1"/>
<dbReference type="InParanoid" id="Q9XWV5"/>
<dbReference type="OMA" id="IRWVQPA"/>
<dbReference type="OrthoDB" id="366214at2759"/>
<dbReference type="PhylomeDB" id="Q9XWV5"/>
<dbReference type="Reactome" id="R-CEL-5389840">
    <property type="pathway name" value="Mitochondrial translation elongation"/>
</dbReference>
<dbReference type="Reactome" id="R-CEL-5419276">
    <property type="pathway name" value="Mitochondrial translation termination"/>
</dbReference>
<dbReference type="Reactome" id="R-CEL-9837999">
    <property type="pathway name" value="Mitochondrial protein degradation"/>
</dbReference>
<dbReference type="PRO" id="PR:Q9XWV5"/>
<dbReference type="Proteomes" id="UP000001940">
    <property type="component" value="Chromosome III"/>
</dbReference>
<dbReference type="Bgee" id="WBGene00012556">
    <property type="expression patterns" value="Expressed in germ line (C elegans) and 4 other cell types or tissues"/>
</dbReference>
<dbReference type="GO" id="GO:0005763">
    <property type="term" value="C:mitochondrial small ribosomal subunit"/>
    <property type="evidence" value="ECO:0007669"/>
    <property type="project" value="InterPro"/>
</dbReference>
<dbReference type="GO" id="GO:0005739">
    <property type="term" value="C:mitochondrion"/>
    <property type="evidence" value="ECO:0000318"/>
    <property type="project" value="GO_Central"/>
</dbReference>
<dbReference type="Gene3D" id="3.30.70.600">
    <property type="entry name" value="Ribosomal protein S10 domain"/>
    <property type="match status" value="1"/>
</dbReference>
<dbReference type="InterPro" id="IPR027486">
    <property type="entry name" value="Ribosomal_uS10_dom"/>
</dbReference>
<dbReference type="InterPro" id="IPR036838">
    <property type="entry name" value="Ribosomal_uS10_dom_sf"/>
</dbReference>
<dbReference type="InterPro" id="IPR040055">
    <property type="entry name" value="Ribosomal_uS10m"/>
</dbReference>
<dbReference type="PANTHER" id="PTHR13334">
    <property type="entry name" value="MITOCHONDRIAL 28S RIBOSOMAL PROTEIN S10"/>
    <property type="match status" value="1"/>
</dbReference>
<dbReference type="PANTHER" id="PTHR13334:SF4">
    <property type="entry name" value="SMALL RIBOSOMAL SUBUNIT PROTEIN US10M"/>
    <property type="match status" value="1"/>
</dbReference>
<dbReference type="Pfam" id="PF00338">
    <property type="entry name" value="Ribosomal_S10"/>
    <property type="match status" value="1"/>
</dbReference>
<dbReference type="SMART" id="SM01403">
    <property type="entry name" value="Ribosomal_S10"/>
    <property type="match status" value="1"/>
</dbReference>
<dbReference type="SUPFAM" id="SSF54999">
    <property type="entry name" value="Ribosomal protein S10"/>
    <property type="match status" value="1"/>
</dbReference>
<feature type="chain" id="PRO_0000146681" description="Small ribosomal subunit protein uS10m">
    <location>
        <begin position="1"/>
        <end position="156"/>
    </location>
</feature>
<comment type="function">
    <text evidence="2">Ribosomal protein required for normal mitochondrial function and normal larval development. Thought to have a role in insulin/IGF signaling.</text>
</comment>
<comment type="subcellular location">
    <subcellularLocation>
        <location evidence="1">Mitochondrion</location>
    </subcellularLocation>
</comment>
<comment type="disruption phenotype">
    <text evidence="2">Induction of dauer formation and larval arrest. Reduced insulin/IGF signaling.</text>
</comment>
<comment type="similarity">
    <text evidence="3">Belongs to the universal ribosomal protein uS10 family.</text>
</comment>
<evidence type="ECO:0000250" key="1"/>
<evidence type="ECO:0000269" key="2">
    <source>
    </source>
</evidence>
<evidence type="ECO:0000305" key="3"/>
<gene>
    <name type="primary">mrps-10</name>
    <name type="ORF">Y37D8A.18</name>
</gene>
<protein>
    <recommendedName>
        <fullName evidence="3">Small ribosomal subunit protein uS10m</fullName>
    </recommendedName>
    <alternativeName>
        <fullName evidence="3">28S ribosomal protein S10, mitochondrial</fullName>
        <shortName>MRP-S10</shortName>
        <shortName>S10mt</shortName>
    </alternativeName>
</protein>
<proteinExistence type="inferred from homology"/>
<accession>Q9XWV5</accession>
<name>RT10_CAEEL</name>
<sequence length="156" mass="17858">MLKLASSLRTGLISRSIRTLAPTVNPAEQQQVQAVLPDKLYSSVEIEYRGHDKAVLKSYTSFLQQVCQHLEIPQGRLEVLPYIRWVQPALRSKFVHKKYKLHYETRTHISKLEILNVTGSTASTFLEYIQRNIPEGVGMRVGFTELQPLPLTIQKN</sequence>
<organism>
    <name type="scientific">Caenorhabditis elegans</name>
    <dbReference type="NCBI Taxonomy" id="6239"/>
    <lineage>
        <taxon>Eukaryota</taxon>
        <taxon>Metazoa</taxon>
        <taxon>Ecdysozoa</taxon>
        <taxon>Nematoda</taxon>
        <taxon>Chromadorea</taxon>
        <taxon>Rhabditida</taxon>
        <taxon>Rhabditina</taxon>
        <taxon>Rhabditomorpha</taxon>
        <taxon>Rhabditoidea</taxon>
        <taxon>Rhabditidae</taxon>
        <taxon>Peloderinae</taxon>
        <taxon>Caenorhabditis</taxon>
    </lineage>
</organism>